<sequence>MMNIEELRKIFCEDGLYAVCVENGNLVSHYRIMCLRKNGAALINFVDARVTDGFILREGEFVTSLQALKEIGIKAGFSAFSGE</sequence>
<accession>P07010</accession>
<name>REM_ECOLI</name>
<feature type="chain" id="PRO_0000168519" description="Uncharacterized protein Rem">
    <location>
        <begin position="1"/>
        <end position="83"/>
    </location>
</feature>
<dbReference type="EMBL" id="X02405">
    <property type="protein sequence ID" value="CAA26253.1"/>
    <property type="molecule type" value="Genomic_DNA"/>
</dbReference>
<dbReference type="EMBL" id="U00096">
    <property type="protein sequence ID" value="AAC74634.1"/>
    <property type="molecule type" value="Genomic_DNA"/>
</dbReference>
<dbReference type="EMBL" id="AP009048">
    <property type="protein sequence ID" value="BAA15260.1"/>
    <property type="molecule type" value="Genomic_DNA"/>
</dbReference>
<dbReference type="PIR" id="D22830">
    <property type="entry name" value="QQECR9"/>
</dbReference>
<dbReference type="RefSeq" id="NP_416079.1">
    <property type="nucleotide sequence ID" value="NC_000913.3"/>
</dbReference>
<dbReference type="RefSeq" id="WP_000980994.1">
    <property type="nucleotide sequence ID" value="NZ_SSUV01000001.1"/>
</dbReference>
<dbReference type="BioGRID" id="4260702">
    <property type="interactions" value="13"/>
</dbReference>
<dbReference type="FunCoup" id="P07010">
    <property type="interactions" value="196"/>
</dbReference>
<dbReference type="IntAct" id="P07010">
    <property type="interactions" value="2"/>
</dbReference>
<dbReference type="STRING" id="511145.b1561"/>
<dbReference type="PaxDb" id="511145-b1561"/>
<dbReference type="EnsemblBacteria" id="AAC74634">
    <property type="protein sequence ID" value="AAC74634"/>
    <property type="gene ID" value="b1561"/>
</dbReference>
<dbReference type="GeneID" id="946109"/>
<dbReference type="KEGG" id="ecj:JW1553"/>
<dbReference type="KEGG" id="eco:b1561"/>
<dbReference type="KEGG" id="ecoc:C3026_09010"/>
<dbReference type="PATRIC" id="fig|511145.12.peg.1633"/>
<dbReference type="EchoBASE" id="EB1119"/>
<dbReference type="eggNOG" id="ENOG50342HU">
    <property type="taxonomic scope" value="Bacteria"/>
</dbReference>
<dbReference type="HOGENOM" id="CLU_2507391_0_0_6"/>
<dbReference type="InParanoid" id="P07010"/>
<dbReference type="OrthoDB" id="6571493at2"/>
<dbReference type="BioCyc" id="EcoCyc:EG11129-MONOMER"/>
<dbReference type="PRO" id="PR:P07010"/>
<dbReference type="Proteomes" id="UP000000625">
    <property type="component" value="Chromosome"/>
</dbReference>
<dbReference type="InterPro" id="IPR016418">
    <property type="entry name" value="UCP004509_Rem"/>
</dbReference>
<dbReference type="PIRSF" id="PIRSF004509">
    <property type="entry name" value="UCP004509_Rem"/>
    <property type="match status" value="1"/>
</dbReference>
<organism>
    <name type="scientific">Escherichia coli (strain K12)</name>
    <dbReference type="NCBI Taxonomy" id="83333"/>
    <lineage>
        <taxon>Bacteria</taxon>
        <taxon>Pseudomonadati</taxon>
        <taxon>Pseudomonadota</taxon>
        <taxon>Gammaproteobacteria</taxon>
        <taxon>Enterobacterales</taxon>
        <taxon>Enterobacteriaceae</taxon>
        <taxon>Escherichia</taxon>
    </lineage>
</organism>
<reference key="1">
    <citation type="journal article" date="1985" name="EMBO J.">
        <title>Sequence of the relB transcription unit from Escherichia coli and identification of the relB gene.</title>
        <authorList>
            <person name="Bech F.W."/>
            <person name="Joergensen S.T."/>
            <person name="Diderichsen B."/>
            <person name="Karlstroem O.H."/>
        </authorList>
    </citation>
    <scope>NUCLEOTIDE SEQUENCE [GENOMIC DNA]</scope>
    <source>
        <strain>K12 / CS520</strain>
    </source>
</reference>
<reference key="2">
    <citation type="journal article" date="1996" name="DNA Res.">
        <title>A 570-kb DNA sequence of the Escherichia coli K-12 genome corresponding to the 28.0-40.1 min region on the linkage map.</title>
        <authorList>
            <person name="Aiba H."/>
            <person name="Baba T."/>
            <person name="Fujita K."/>
            <person name="Hayashi K."/>
            <person name="Inada T."/>
            <person name="Isono K."/>
            <person name="Itoh T."/>
            <person name="Kasai H."/>
            <person name="Kashimoto K."/>
            <person name="Kimura S."/>
            <person name="Kitakawa M."/>
            <person name="Kitagawa M."/>
            <person name="Makino K."/>
            <person name="Miki T."/>
            <person name="Mizobuchi K."/>
            <person name="Mori H."/>
            <person name="Mori T."/>
            <person name="Motomura K."/>
            <person name="Nakade S."/>
            <person name="Nakamura Y."/>
            <person name="Nashimoto H."/>
            <person name="Nishio Y."/>
            <person name="Oshima T."/>
            <person name="Saito N."/>
            <person name="Sampei G."/>
            <person name="Seki Y."/>
            <person name="Sivasundaram S."/>
            <person name="Tagami H."/>
            <person name="Takeda J."/>
            <person name="Takemoto K."/>
            <person name="Takeuchi Y."/>
            <person name="Wada C."/>
            <person name="Yamamoto Y."/>
            <person name="Horiuchi T."/>
        </authorList>
    </citation>
    <scope>NUCLEOTIDE SEQUENCE [LARGE SCALE GENOMIC DNA]</scope>
    <source>
        <strain>K12 / W3110 / ATCC 27325 / DSM 5911</strain>
    </source>
</reference>
<reference key="3">
    <citation type="journal article" date="1997" name="Science">
        <title>The complete genome sequence of Escherichia coli K-12.</title>
        <authorList>
            <person name="Blattner F.R."/>
            <person name="Plunkett G. III"/>
            <person name="Bloch C.A."/>
            <person name="Perna N.T."/>
            <person name="Burland V."/>
            <person name="Riley M."/>
            <person name="Collado-Vides J."/>
            <person name="Glasner J.D."/>
            <person name="Rode C.K."/>
            <person name="Mayhew G.F."/>
            <person name="Gregor J."/>
            <person name="Davis N.W."/>
            <person name="Kirkpatrick H.A."/>
            <person name="Goeden M.A."/>
            <person name="Rose D.J."/>
            <person name="Mau B."/>
            <person name="Shao Y."/>
        </authorList>
    </citation>
    <scope>NUCLEOTIDE SEQUENCE [LARGE SCALE GENOMIC DNA]</scope>
    <source>
        <strain>K12 / MG1655 / ATCC 47076</strain>
    </source>
</reference>
<reference key="4">
    <citation type="journal article" date="2006" name="Mol. Syst. Biol.">
        <title>Highly accurate genome sequences of Escherichia coli K-12 strains MG1655 and W3110.</title>
        <authorList>
            <person name="Hayashi K."/>
            <person name="Morooka N."/>
            <person name="Yamamoto Y."/>
            <person name="Fujita K."/>
            <person name="Isono K."/>
            <person name="Choi S."/>
            <person name="Ohtsubo E."/>
            <person name="Baba T."/>
            <person name="Wanner B.L."/>
            <person name="Mori H."/>
            <person name="Horiuchi T."/>
        </authorList>
    </citation>
    <scope>NUCLEOTIDE SEQUENCE [LARGE SCALE GENOMIC DNA]</scope>
    <source>
        <strain>K12 / W3110 / ATCC 27325 / DSM 5911</strain>
    </source>
</reference>
<protein>
    <recommendedName>
        <fullName>Uncharacterized protein Rem</fullName>
    </recommendedName>
</protein>
<keyword id="KW-1185">Reference proteome</keyword>
<gene>
    <name type="primary">rem</name>
    <name type="ordered locus">b1561</name>
    <name type="ordered locus">JW1553</name>
</gene>
<proteinExistence type="predicted"/>